<dbReference type="EMBL" id="AE016879">
    <property type="protein sequence ID" value="AAP28486.1"/>
    <property type="molecule type" value="Genomic_DNA"/>
</dbReference>
<dbReference type="EMBL" id="AE017334">
    <property type="protein sequence ID" value="AAT33918.1"/>
    <property type="molecule type" value="Genomic_DNA"/>
</dbReference>
<dbReference type="EMBL" id="AE017225">
    <property type="protein sequence ID" value="AAT56748.1"/>
    <property type="status" value="ALT_INIT"/>
    <property type="molecule type" value="Genomic_DNA"/>
</dbReference>
<dbReference type="RefSeq" id="NP_847000.1">
    <property type="nucleotide sequence ID" value="NC_003997.3"/>
</dbReference>
<dbReference type="RefSeq" id="WP_000082701.1">
    <property type="nucleotide sequence ID" value="NZ_WXXJ01000026.1"/>
</dbReference>
<dbReference type="SMR" id="Q81L37"/>
<dbReference type="STRING" id="261594.GBAA_4797"/>
<dbReference type="DNASU" id="1083922"/>
<dbReference type="GeneID" id="93006559"/>
<dbReference type="KEGG" id="ban:BA_4797"/>
<dbReference type="KEGG" id="bar:GBAA_4797"/>
<dbReference type="KEGG" id="bat:BAS4450"/>
<dbReference type="PATRIC" id="fig|198094.11.peg.4758"/>
<dbReference type="eggNOG" id="COG3027">
    <property type="taxonomic scope" value="Bacteria"/>
</dbReference>
<dbReference type="HOGENOM" id="CLU_116623_4_0_9"/>
<dbReference type="OMA" id="KMHEFSE"/>
<dbReference type="OrthoDB" id="9808604at2"/>
<dbReference type="Proteomes" id="UP000000427">
    <property type="component" value="Chromosome"/>
</dbReference>
<dbReference type="Proteomes" id="UP000000594">
    <property type="component" value="Chromosome"/>
</dbReference>
<dbReference type="GO" id="GO:0032153">
    <property type="term" value="C:cell division site"/>
    <property type="evidence" value="ECO:0007669"/>
    <property type="project" value="TreeGrafter"/>
</dbReference>
<dbReference type="GO" id="GO:0030428">
    <property type="term" value="C:cell septum"/>
    <property type="evidence" value="ECO:0007669"/>
    <property type="project" value="TreeGrafter"/>
</dbReference>
<dbReference type="GO" id="GO:0005829">
    <property type="term" value="C:cytosol"/>
    <property type="evidence" value="ECO:0007669"/>
    <property type="project" value="TreeGrafter"/>
</dbReference>
<dbReference type="GO" id="GO:0005886">
    <property type="term" value="C:plasma membrane"/>
    <property type="evidence" value="ECO:0007669"/>
    <property type="project" value="UniProtKB-UniRule"/>
</dbReference>
<dbReference type="GO" id="GO:0000917">
    <property type="term" value="P:division septum assembly"/>
    <property type="evidence" value="ECO:0007669"/>
    <property type="project" value="UniProtKB-KW"/>
</dbReference>
<dbReference type="GO" id="GO:0043093">
    <property type="term" value="P:FtsZ-dependent cytokinesis"/>
    <property type="evidence" value="ECO:0007669"/>
    <property type="project" value="TreeGrafter"/>
</dbReference>
<dbReference type="GO" id="GO:0000921">
    <property type="term" value="P:septin ring assembly"/>
    <property type="evidence" value="ECO:0007669"/>
    <property type="project" value="TreeGrafter"/>
</dbReference>
<dbReference type="Gene3D" id="6.10.250.790">
    <property type="match status" value="1"/>
</dbReference>
<dbReference type="HAMAP" id="MF_02013">
    <property type="entry name" value="ZapA_type2"/>
    <property type="match status" value="1"/>
</dbReference>
<dbReference type="InterPro" id="IPR053712">
    <property type="entry name" value="Bac_CellDiv_Activator"/>
</dbReference>
<dbReference type="InterPro" id="IPR007838">
    <property type="entry name" value="Cell_div_ZapA-like"/>
</dbReference>
<dbReference type="InterPro" id="IPR036192">
    <property type="entry name" value="Cell_div_ZapA-like_sf"/>
</dbReference>
<dbReference type="InterPro" id="IPR023688">
    <property type="entry name" value="Cell_div_ZapA_firmicutes"/>
</dbReference>
<dbReference type="NCBIfam" id="NF010724">
    <property type="entry name" value="PRK14126.1"/>
    <property type="match status" value="1"/>
</dbReference>
<dbReference type="PANTHER" id="PTHR34981">
    <property type="entry name" value="CELL DIVISION PROTEIN ZAPA"/>
    <property type="match status" value="1"/>
</dbReference>
<dbReference type="PANTHER" id="PTHR34981:SF1">
    <property type="entry name" value="CELL DIVISION PROTEIN ZAPA"/>
    <property type="match status" value="1"/>
</dbReference>
<dbReference type="Pfam" id="PF05164">
    <property type="entry name" value="ZapA"/>
    <property type="match status" value="1"/>
</dbReference>
<dbReference type="SUPFAM" id="SSF102829">
    <property type="entry name" value="Cell division protein ZapA-like"/>
    <property type="match status" value="1"/>
</dbReference>
<organism>
    <name type="scientific">Bacillus anthracis</name>
    <dbReference type="NCBI Taxonomy" id="1392"/>
    <lineage>
        <taxon>Bacteria</taxon>
        <taxon>Bacillati</taxon>
        <taxon>Bacillota</taxon>
        <taxon>Bacilli</taxon>
        <taxon>Bacillales</taxon>
        <taxon>Bacillaceae</taxon>
        <taxon>Bacillus</taxon>
        <taxon>Bacillus cereus group</taxon>
    </lineage>
</organism>
<keyword id="KW-0131">Cell cycle</keyword>
<keyword id="KW-0132">Cell division</keyword>
<keyword id="KW-0963">Cytoplasm</keyword>
<keyword id="KW-1185">Reference proteome</keyword>
<keyword id="KW-0717">Septation</keyword>
<proteinExistence type="inferred from homology"/>
<accession>Q81L37</accession>
<accession>Q6HSJ1</accession>
<accession>Q6KLT6</accession>
<reference key="1">
    <citation type="journal article" date="2003" name="Nature">
        <title>The genome sequence of Bacillus anthracis Ames and comparison to closely related bacteria.</title>
        <authorList>
            <person name="Read T.D."/>
            <person name="Peterson S.N."/>
            <person name="Tourasse N.J."/>
            <person name="Baillie L.W."/>
            <person name="Paulsen I.T."/>
            <person name="Nelson K.E."/>
            <person name="Tettelin H."/>
            <person name="Fouts D.E."/>
            <person name="Eisen J.A."/>
            <person name="Gill S.R."/>
            <person name="Holtzapple E.K."/>
            <person name="Okstad O.A."/>
            <person name="Helgason E."/>
            <person name="Rilstone J."/>
            <person name="Wu M."/>
            <person name="Kolonay J.F."/>
            <person name="Beanan M.J."/>
            <person name="Dodson R.J."/>
            <person name="Brinkac L.M."/>
            <person name="Gwinn M.L."/>
            <person name="DeBoy R.T."/>
            <person name="Madpu R."/>
            <person name="Daugherty S.C."/>
            <person name="Durkin A.S."/>
            <person name="Haft D.H."/>
            <person name="Nelson W.C."/>
            <person name="Peterson J.D."/>
            <person name="Pop M."/>
            <person name="Khouri H.M."/>
            <person name="Radune D."/>
            <person name="Benton J.L."/>
            <person name="Mahamoud Y."/>
            <person name="Jiang L."/>
            <person name="Hance I.R."/>
            <person name="Weidman J.F."/>
            <person name="Berry K.J."/>
            <person name="Plaut R.D."/>
            <person name="Wolf A.M."/>
            <person name="Watkins K.L."/>
            <person name="Nierman W.C."/>
            <person name="Hazen A."/>
            <person name="Cline R.T."/>
            <person name="Redmond C."/>
            <person name="Thwaite J.E."/>
            <person name="White O."/>
            <person name="Salzberg S.L."/>
            <person name="Thomason B."/>
            <person name="Friedlander A.M."/>
            <person name="Koehler T.M."/>
            <person name="Hanna P.C."/>
            <person name="Kolstoe A.-B."/>
            <person name="Fraser C.M."/>
        </authorList>
    </citation>
    <scope>NUCLEOTIDE SEQUENCE [LARGE SCALE GENOMIC DNA]</scope>
    <source>
        <strain>Ames / isolate Porton</strain>
    </source>
</reference>
<reference key="2">
    <citation type="journal article" date="2009" name="J. Bacteriol.">
        <title>The complete genome sequence of Bacillus anthracis Ames 'Ancestor'.</title>
        <authorList>
            <person name="Ravel J."/>
            <person name="Jiang L."/>
            <person name="Stanley S.T."/>
            <person name="Wilson M.R."/>
            <person name="Decker R.S."/>
            <person name="Read T.D."/>
            <person name="Worsham P."/>
            <person name="Keim P.S."/>
            <person name="Salzberg S.L."/>
            <person name="Fraser-Liggett C.M."/>
            <person name="Rasko D.A."/>
        </authorList>
    </citation>
    <scope>NUCLEOTIDE SEQUENCE [LARGE SCALE GENOMIC DNA]</scope>
    <source>
        <strain>Ames ancestor</strain>
    </source>
</reference>
<reference key="3">
    <citation type="submission" date="2004-01" db="EMBL/GenBank/DDBJ databases">
        <title>Complete genome sequence of Bacillus anthracis Sterne.</title>
        <authorList>
            <person name="Brettin T.S."/>
            <person name="Bruce D."/>
            <person name="Challacombe J.F."/>
            <person name="Gilna P."/>
            <person name="Han C."/>
            <person name="Hill K."/>
            <person name="Hitchcock P."/>
            <person name="Jackson P."/>
            <person name="Keim P."/>
            <person name="Longmire J."/>
            <person name="Lucas S."/>
            <person name="Okinaka R."/>
            <person name="Richardson P."/>
            <person name="Rubin E."/>
            <person name="Tice H."/>
        </authorList>
    </citation>
    <scope>NUCLEOTIDE SEQUENCE [LARGE SCALE GENOMIC DNA]</scope>
    <source>
        <strain>Sterne</strain>
    </source>
</reference>
<gene>
    <name evidence="1" type="primary">zapA</name>
    <name type="ordered locus">BA_4797</name>
    <name type="ordered locus">GBAA_4797</name>
    <name type="ordered locus">BAS4450</name>
</gene>
<name>ZAPA_BACAN</name>
<evidence type="ECO:0000255" key="1">
    <source>
        <dbReference type="HAMAP-Rule" id="MF_02013"/>
    </source>
</evidence>
<evidence type="ECO:0000305" key="2"/>
<comment type="function">
    <text evidence="1">Activator of cell division through the inhibition of FtsZ GTPase activity, therefore promoting FtsZ assembly into bundles of protofilaments necessary for the formation of the division Z ring. It is recruited early at mid-cell but it is not essential for cell division.</text>
</comment>
<comment type="subunit">
    <text evidence="1">Homodimer. Interacts with FtsZ.</text>
</comment>
<comment type="subcellular location">
    <subcellularLocation>
        <location evidence="1">Cytoplasm</location>
    </subcellularLocation>
    <text evidence="1">Localizes at mid-cell. In sporulating cells, localizes near the cell poles.</text>
</comment>
<comment type="similarity">
    <text evidence="1">Belongs to the ZapA family. Type 2 subfamily.</text>
</comment>
<comment type="sequence caution" evidence="2">
    <conflict type="erroneous initiation">
        <sequence resource="EMBL-CDS" id="AAT56748"/>
    </conflict>
</comment>
<protein>
    <recommendedName>
        <fullName evidence="1">Cell division protein ZapA</fullName>
    </recommendedName>
    <alternativeName>
        <fullName evidence="1">Z ring-associated protein ZapA</fullName>
    </alternativeName>
</protein>
<feature type="chain" id="PRO_0000345677" description="Cell division protein ZapA">
    <location>
        <begin position="1"/>
        <end position="89"/>
    </location>
</feature>
<sequence length="89" mass="10120">MSQQKGKKSRINVEIYGQQYSVVGDESTSHIRMVAAIVDDKMRELNAKNPSLDTSRLAVLTAVNVIHDYIKLKEEHEKLKESMTKKGME</sequence>